<sequence length="662" mass="73824">MASPRAVQLSLRKPTHAVCVVGVETLVNVYSDVPKGAKTFGVSGSSEVKIYMVYDPSRVAEPAGWAHWPLDANVDVVVVADTVSKDLYDFKVKVSYFESQEAAALAHSVLYLTAVDVSLDVDTGRTGKVKKGSGDKKTWRWGPGGSGAILLVNCDRDIHGSREDLHANHLKSLEDLQDMSPMVLSCGGPDELFESHKLVLKASLSDSRRLKVFCARGGTSLSNYKQVLGPRHSSYEVERHSGERAIQFYVEGLAFPDASFSGLLSLSVSLVDTRPLSEVSVFTDSVTFRVAPWIMTPNTQPPLELYVCSVTDIHGRNDKFLEDMSHLATKANCKLVVCPRAENRNDRWIQDELEFGYIDAPHKSFPVVFDSPRNRGLRDFALKRILGPDFGYVTREIEFAGASGLDSFGNLDVSPPVRVGNTDYPLGRILIGGSFPKPSGRRMARVVRDFLQAQQVQSPVELYSDWLSVGHVDEFLSFVPTSDQKGFRLLLASPSACLQLFQEKKEEGYGEAEQFDGLKHKAKRSINDILADKHLRRDSAHVQKCIDWNREVLKRELGLSESDIVDIPQLFFLKGAYAEAFFPDMVNMVVLGKYLGIPKPFGPLINGRCCLEEKVRSLLEPLGLRCVFIDDFLFYHQLLGEIHCGTNVRRKPFTFKWWNSVP</sequence>
<comment type="function">
    <text evidence="1">Catalyzes the deimination of arginine residues of proteins.</text>
</comment>
<comment type="catalytic activity">
    <reaction evidence="1">
        <text>L-arginyl-[protein] + H2O = L-citrullyl-[protein] + NH4(+)</text>
        <dbReference type="Rhea" id="RHEA:18089"/>
        <dbReference type="Rhea" id="RHEA-COMP:10532"/>
        <dbReference type="Rhea" id="RHEA-COMP:10588"/>
        <dbReference type="ChEBI" id="CHEBI:15377"/>
        <dbReference type="ChEBI" id="CHEBI:28938"/>
        <dbReference type="ChEBI" id="CHEBI:29965"/>
        <dbReference type="ChEBI" id="CHEBI:83397"/>
        <dbReference type="EC" id="3.5.3.15"/>
    </reaction>
</comment>
<comment type="cofactor">
    <cofactor>
        <name>Ca(2+)</name>
        <dbReference type="ChEBI" id="CHEBI:29108"/>
    </cofactor>
</comment>
<comment type="subunit">
    <text evidence="1">Monomer.</text>
</comment>
<comment type="subcellular location">
    <subcellularLocation>
        <location evidence="1">Cytoplasm</location>
    </subcellularLocation>
</comment>
<comment type="tissue specificity">
    <text evidence="3">Expressed only in the epidermis and uterus.</text>
</comment>
<comment type="developmental stage">
    <text>Expressed during the estrus cycle. Expression is maximum at proestrus and moderate at estrus. Not expressed in diestrus and metaestrus phases.</text>
</comment>
<comment type="induction">
    <text>By estrogen.</text>
</comment>
<comment type="similarity">
    <text evidence="4">Belongs to the protein arginine deiminase family.</text>
</comment>
<keyword id="KW-0106">Calcium</keyword>
<keyword id="KW-0963">Cytoplasm</keyword>
<keyword id="KW-0378">Hydrolase</keyword>
<keyword id="KW-0479">Metal-binding</keyword>
<keyword id="KW-1185">Reference proteome</keyword>
<gene>
    <name type="primary">Padi1</name>
    <name type="synonym">Pad1</name>
    <name type="synonym">Pdi1</name>
</gene>
<feature type="chain" id="PRO_0000220024" description="Protein-arginine deiminase type-1">
    <location>
        <begin position="1"/>
        <end position="662"/>
    </location>
</feature>
<feature type="active site" description="Nucleophile" evidence="2">
    <location>
        <position position="644"/>
    </location>
</feature>
<feature type="binding site" evidence="1">
    <location>
        <position position="153"/>
    </location>
    <ligand>
        <name>Ca(2+)</name>
        <dbReference type="ChEBI" id="CHEBI:29108"/>
        <label>1</label>
    </ligand>
</feature>
<feature type="binding site" evidence="1">
    <location>
        <position position="155"/>
    </location>
    <ligand>
        <name>Ca(2+)</name>
        <dbReference type="ChEBI" id="CHEBI:29108"/>
        <label>1</label>
    </ligand>
</feature>
<feature type="binding site" evidence="1">
    <location>
        <position position="155"/>
    </location>
    <ligand>
        <name>Ca(2+)</name>
        <dbReference type="ChEBI" id="CHEBI:29108"/>
        <label>2</label>
    </ligand>
</feature>
<feature type="binding site" evidence="1">
    <location>
        <position position="157"/>
    </location>
    <ligand>
        <name>Ca(2+)</name>
        <dbReference type="ChEBI" id="CHEBI:29108"/>
        <label>1</label>
    </ligand>
</feature>
<feature type="binding site" evidence="1">
    <location>
        <position position="157"/>
    </location>
    <ligand>
        <name>Ca(2+)</name>
        <dbReference type="ChEBI" id="CHEBI:29108"/>
        <label>2</label>
    </ligand>
</feature>
<feature type="binding site" evidence="1">
    <location>
        <position position="164"/>
    </location>
    <ligand>
        <name>Ca(2+)</name>
        <dbReference type="ChEBI" id="CHEBI:29108"/>
        <label>1</label>
    </ligand>
</feature>
<feature type="binding site" evidence="1">
    <location>
        <position position="175"/>
    </location>
    <ligand>
        <name>Ca(2+)</name>
        <dbReference type="ChEBI" id="CHEBI:29108"/>
        <label>1</label>
    </ligand>
</feature>
<feature type="binding site" evidence="1">
    <location>
        <position position="178"/>
    </location>
    <ligand>
        <name>Ca(2+)</name>
        <dbReference type="ChEBI" id="CHEBI:29108"/>
        <label>1</label>
    </ligand>
</feature>
<feature type="binding site" evidence="1">
    <location>
        <position position="178"/>
    </location>
    <ligand>
        <name>Ca(2+)</name>
        <dbReference type="ChEBI" id="CHEBI:29108"/>
        <label>2</label>
    </ligand>
</feature>
<feature type="binding site" evidence="1">
    <location>
        <position position="350"/>
    </location>
    <ligand>
        <name>Ca(2+)</name>
        <dbReference type="ChEBI" id="CHEBI:29108"/>
        <label>4</label>
    </ligand>
</feature>
<feature type="binding site" evidence="1">
    <location>
        <position position="352"/>
    </location>
    <ligand>
        <name>Ca(2+)</name>
        <dbReference type="ChEBI" id="CHEBI:29108"/>
        <label>3</label>
    </ligand>
</feature>
<feature type="binding site" evidence="1">
    <location>
        <position position="363"/>
    </location>
    <ligand>
        <name>Ca(2+)</name>
        <dbReference type="ChEBI" id="CHEBI:29108"/>
        <label>2</label>
    </ligand>
</feature>
<feature type="binding site" evidence="1">
    <location>
        <position position="370"/>
    </location>
    <ligand>
        <name>Ca(2+)</name>
        <dbReference type="ChEBI" id="CHEBI:29108"/>
        <label>3</label>
    </ligand>
</feature>
<feature type="binding site" evidence="1">
    <location>
        <position position="371"/>
    </location>
    <ligand>
        <name>Ca(2+)</name>
        <dbReference type="ChEBI" id="CHEBI:29108"/>
        <label>3</label>
    </ligand>
</feature>
<feature type="binding site" evidence="1">
    <location>
        <position position="374"/>
    </location>
    <ligand>
        <name>Ca(2+)</name>
        <dbReference type="ChEBI" id="CHEBI:29108"/>
        <label>3</label>
    </ligand>
</feature>
<feature type="binding site" evidence="1">
    <location>
        <position position="408"/>
    </location>
    <ligand>
        <name>Ca(2+)</name>
        <dbReference type="ChEBI" id="CHEBI:29108"/>
        <label>4</label>
    </ligand>
</feature>
<feature type="binding site" evidence="1">
    <location>
        <position position="411"/>
    </location>
    <ligand>
        <name>Ca(2+)</name>
        <dbReference type="ChEBI" id="CHEBI:29108"/>
        <label>4</label>
    </ligand>
</feature>
<proteinExistence type="evidence at protein level"/>
<reference key="1">
    <citation type="journal article" date="1999" name="Eur. J. Biochem.">
        <title>Molecular cloning of cDNAs of mouse peptidylarginine deiminase type I, type III and type IV, and the expression pattern of type I in mouse.</title>
        <authorList>
            <person name="Rusd A.A."/>
            <person name="Ikejiri Y."/>
            <person name="Ono H."/>
            <person name="Yonekawa T."/>
            <person name="Shiraiwa M."/>
            <person name="Kawada A."/>
            <person name="Takahara H."/>
        </authorList>
    </citation>
    <scope>NUCLEOTIDE SEQUENCE [MRNA]</scope>
    <source>
        <tissue>Epidermis</tissue>
        <tissue>Uterus</tissue>
    </source>
</reference>
<reference key="2">
    <citation type="journal article" date="2004" name="Gene">
        <title>Comparative analysis of the mouse and human peptidylarginine deiminase gene clusters reveals highly conserved non-coding segments and a new human gene, PADI6.</title>
        <authorList>
            <person name="Chavanas S."/>
            <person name="Mechin M.-C."/>
            <person name="Takahara H."/>
            <person name="Kawada A."/>
            <person name="Nachat R."/>
            <person name="Serre G."/>
            <person name="Simon M."/>
        </authorList>
    </citation>
    <scope>NUCLEOTIDE SEQUENCE [GENOMIC DNA]</scope>
    <source>
        <strain>129/SvJ</strain>
    </source>
</reference>
<reference key="3">
    <citation type="journal article" date="1991" name="J. Biochem.">
        <title>Three types of mouse peptidylarginine deiminase: characterization and tissue distribution.</title>
        <authorList>
            <person name="Terakawa H."/>
            <person name="Takahara H."/>
            <person name="Sugawara K."/>
        </authorList>
    </citation>
    <scope>CHARACTERIZATION</scope>
    <scope>TISSUE SPECIFICITY</scope>
</reference>
<organism>
    <name type="scientific">Mus musculus</name>
    <name type="common">Mouse</name>
    <dbReference type="NCBI Taxonomy" id="10090"/>
    <lineage>
        <taxon>Eukaryota</taxon>
        <taxon>Metazoa</taxon>
        <taxon>Chordata</taxon>
        <taxon>Craniata</taxon>
        <taxon>Vertebrata</taxon>
        <taxon>Euteleostomi</taxon>
        <taxon>Mammalia</taxon>
        <taxon>Eutheria</taxon>
        <taxon>Euarchontoglires</taxon>
        <taxon>Glires</taxon>
        <taxon>Rodentia</taxon>
        <taxon>Myomorpha</taxon>
        <taxon>Muroidea</taxon>
        <taxon>Muridae</taxon>
        <taxon>Murinae</taxon>
        <taxon>Mus</taxon>
        <taxon>Mus</taxon>
    </lineage>
</organism>
<name>PADI1_MOUSE</name>
<accession>Q9Z185</accession>
<dbReference type="EC" id="3.5.3.15" evidence="1"/>
<dbReference type="EMBL" id="AB013848">
    <property type="protein sequence ID" value="BAA34181.1"/>
    <property type="molecule type" value="mRNA"/>
</dbReference>
<dbReference type="EMBL" id="AB121692">
    <property type="protein sequence ID" value="BAD16625.1"/>
    <property type="molecule type" value="Genomic_DNA"/>
</dbReference>
<dbReference type="CCDS" id="CCDS18856.1"/>
<dbReference type="PIR" id="PH0203">
    <property type="entry name" value="PH0203"/>
</dbReference>
<dbReference type="RefSeq" id="NP_035189.1">
    <property type="nucleotide sequence ID" value="NM_011059.2"/>
</dbReference>
<dbReference type="SMR" id="Q9Z185"/>
<dbReference type="FunCoup" id="Q9Z185">
    <property type="interactions" value="210"/>
</dbReference>
<dbReference type="STRING" id="10090.ENSMUSP00000026378"/>
<dbReference type="PhosphoSitePlus" id="Q9Z185"/>
<dbReference type="PaxDb" id="10090-ENSMUSP00000026378"/>
<dbReference type="ProteomicsDB" id="294101"/>
<dbReference type="Antibodypedia" id="14640">
    <property type="antibodies" value="84 antibodies from 16 providers"/>
</dbReference>
<dbReference type="DNASU" id="18599"/>
<dbReference type="Ensembl" id="ENSMUST00000026378.4">
    <property type="protein sequence ID" value="ENSMUSP00000026378.4"/>
    <property type="gene ID" value="ENSMUSG00000025329.4"/>
</dbReference>
<dbReference type="GeneID" id="18599"/>
<dbReference type="KEGG" id="mmu:18599"/>
<dbReference type="UCSC" id="uc008vnh.1">
    <property type="organism name" value="mouse"/>
</dbReference>
<dbReference type="AGR" id="MGI:1338893"/>
<dbReference type="CTD" id="29943"/>
<dbReference type="MGI" id="MGI:1338893">
    <property type="gene designation" value="Padi1"/>
</dbReference>
<dbReference type="VEuPathDB" id="HostDB:ENSMUSG00000025329"/>
<dbReference type="eggNOG" id="ENOG502QVJA">
    <property type="taxonomic scope" value="Eukaryota"/>
</dbReference>
<dbReference type="GeneTree" id="ENSGT00940000153217"/>
<dbReference type="HOGENOM" id="CLU_021911_0_0_1"/>
<dbReference type="InParanoid" id="Q9Z185"/>
<dbReference type="OMA" id="VEVFMVY"/>
<dbReference type="OrthoDB" id="5102063at2759"/>
<dbReference type="PhylomeDB" id="Q9Z185"/>
<dbReference type="TreeFam" id="TF331952"/>
<dbReference type="Reactome" id="R-MMU-3247509">
    <property type="pathway name" value="Chromatin modifying enzymes"/>
</dbReference>
<dbReference type="BioGRID-ORCS" id="18599">
    <property type="hits" value="4 hits in 80 CRISPR screens"/>
</dbReference>
<dbReference type="PRO" id="PR:Q9Z185"/>
<dbReference type="Proteomes" id="UP000000589">
    <property type="component" value="Chromosome 4"/>
</dbReference>
<dbReference type="RNAct" id="Q9Z185">
    <property type="molecule type" value="protein"/>
</dbReference>
<dbReference type="Bgee" id="ENSMUSG00000025329">
    <property type="expression patterns" value="Expressed in uterine cervix and 34 other cell types or tissues"/>
</dbReference>
<dbReference type="ExpressionAtlas" id="Q9Z185">
    <property type="expression patterns" value="baseline and differential"/>
</dbReference>
<dbReference type="GO" id="GO:0005737">
    <property type="term" value="C:cytoplasm"/>
    <property type="evidence" value="ECO:0000250"/>
    <property type="project" value="UniProtKB"/>
</dbReference>
<dbReference type="GO" id="GO:0005829">
    <property type="term" value="C:cytosol"/>
    <property type="evidence" value="ECO:0007669"/>
    <property type="project" value="Ensembl"/>
</dbReference>
<dbReference type="GO" id="GO:0005654">
    <property type="term" value="C:nucleoplasm"/>
    <property type="evidence" value="ECO:0007669"/>
    <property type="project" value="Ensembl"/>
</dbReference>
<dbReference type="GO" id="GO:0005509">
    <property type="term" value="F:calcium ion binding"/>
    <property type="evidence" value="ECO:0000250"/>
    <property type="project" value="UniProtKB"/>
</dbReference>
<dbReference type="GO" id="GO:0004668">
    <property type="term" value="F:protein-arginine deiminase activity"/>
    <property type="evidence" value="ECO:0000250"/>
    <property type="project" value="UniProtKB"/>
</dbReference>
<dbReference type="FunFam" id="2.60.40.1700:FF:000001">
    <property type="entry name" value="Protein-arginine deiminase type-2"/>
    <property type="match status" value="1"/>
</dbReference>
<dbReference type="FunFam" id="3.75.10.10:FF:000003">
    <property type="entry name" value="Protein-arginine deiminase type-2"/>
    <property type="match status" value="1"/>
</dbReference>
<dbReference type="Gene3D" id="3.75.10.10">
    <property type="entry name" value="L-arginine/glycine Amidinotransferase, Chain A"/>
    <property type="match status" value="1"/>
</dbReference>
<dbReference type="Gene3D" id="2.60.40.1700">
    <property type="entry name" value="Protein-arginine deiminase, central domain"/>
    <property type="match status" value="1"/>
</dbReference>
<dbReference type="Gene3D" id="2.60.40.1860">
    <property type="entry name" value="Protein-arginine deiminase, N-terminal domain"/>
    <property type="match status" value="1"/>
</dbReference>
<dbReference type="InterPro" id="IPR008972">
    <property type="entry name" value="Cupredoxin"/>
</dbReference>
<dbReference type="InterPro" id="IPR004303">
    <property type="entry name" value="PAD"/>
</dbReference>
<dbReference type="InterPro" id="IPR013530">
    <property type="entry name" value="PAD_C"/>
</dbReference>
<dbReference type="InterPro" id="IPR036556">
    <property type="entry name" value="PAD_central_sf"/>
</dbReference>
<dbReference type="InterPro" id="IPR013732">
    <property type="entry name" value="PAD_N"/>
</dbReference>
<dbReference type="InterPro" id="IPR038685">
    <property type="entry name" value="PAD_N_sf"/>
</dbReference>
<dbReference type="InterPro" id="IPR013733">
    <property type="entry name" value="Prot_Arg_deaminase_cen_dom"/>
</dbReference>
<dbReference type="PANTHER" id="PTHR10837">
    <property type="entry name" value="PEPTIDYLARGININE DEIMINASE"/>
    <property type="match status" value="1"/>
</dbReference>
<dbReference type="PANTHER" id="PTHR10837:SF11">
    <property type="entry name" value="PROTEIN-ARGININE DEIMINASE TYPE-1"/>
    <property type="match status" value="1"/>
</dbReference>
<dbReference type="Pfam" id="PF03068">
    <property type="entry name" value="PAD"/>
    <property type="match status" value="1"/>
</dbReference>
<dbReference type="Pfam" id="PF08527">
    <property type="entry name" value="PAD_M"/>
    <property type="match status" value="1"/>
</dbReference>
<dbReference type="Pfam" id="PF08526">
    <property type="entry name" value="PAD_N"/>
    <property type="match status" value="1"/>
</dbReference>
<dbReference type="PIRSF" id="PIRSF001247">
    <property type="entry name" value="Protein-arginine_deiminase"/>
    <property type="match status" value="1"/>
</dbReference>
<dbReference type="SUPFAM" id="SSF49503">
    <property type="entry name" value="Cupredoxins"/>
    <property type="match status" value="1"/>
</dbReference>
<dbReference type="SUPFAM" id="SSF55909">
    <property type="entry name" value="Pentein"/>
    <property type="match status" value="1"/>
</dbReference>
<dbReference type="SUPFAM" id="SSF110083">
    <property type="entry name" value="Peptidylarginine deiminase Pad4, middle domain"/>
    <property type="match status" value="1"/>
</dbReference>
<protein>
    <recommendedName>
        <fullName>Protein-arginine deiminase type-1</fullName>
        <ecNumber evidence="1">3.5.3.15</ecNumber>
    </recommendedName>
    <alternativeName>
        <fullName>Peptidylarginine deiminase I</fullName>
    </alternativeName>
    <alternativeName>
        <fullName>Protein-arginine deiminase type I</fullName>
    </alternativeName>
</protein>
<evidence type="ECO:0000250" key="1">
    <source>
        <dbReference type="UniProtKB" id="Q9ULC6"/>
    </source>
</evidence>
<evidence type="ECO:0000250" key="2">
    <source>
        <dbReference type="UniProtKB" id="Q9Y2J8"/>
    </source>
</evidence>
<evidence type="ECO:0000269" key="3">
    <source>
    </source>
</evidence>
<evidence type="ECO:0000305" key="4"/>